<sequence length="338" mass="36159">MAIELLYDADADLSLIQGRKVAIVGYGSQGHAHSQNLRDSGVEVVIGLREGSKSAEKAKEAGFEVKTTAEAAAWADVIMLLAPDTSQAEIFTNDIEPNLNAGDALLFGHGLNIHFDLIKPADDIIVGMVAPKGPGHLVRRQFVDGKGVPCLIAVDQDPTGTAQALTLSYAAAIGGARAGVIPTTFEAETVTDLFGEQAVLCGGTEELVKVGFEVLTEAGYEPEMAYFEVLHELKLIVDLMFEGGISNMNYSVSDTAEFGGYLSGPRVIDADTKSRMKDILTDIQDGTFTKRLIANVENGNTELEGLRASYNNHPIEETGAKLRDLMSWVKVDARAETA</sequence>
<name>ILVC_CORGL</name>
<evidence type="ECO:0000255" key="1">
    <source>
        <dbReference type="HAMAP-Rule" id="MF_00435"/>
    </source>
</evidence>
<evidence type="ECO:0000255" key="2">
    <source>
        <dbReference type="PROSITE-ProRule" id="PRU01197"/>
    </source>
</evidence>
<evidence type="ECO:0000255" key="3">
    <source>
        <dbReference type="PROSITE-ProRule" id="PRU01198"/>
    </source>
</evidence>
<evidence type="ECO:0007829" key="4">
    <source>
        <dbReference type="PDB" id="6JX2"/>
    </source>
</evidence>
<proteinExistence type="evidence at protein level"/>
<comment type="function">
    <text evidence="1">Involved in the biosynthesis of branched-chain amino acids (BCAA). Catalyzes an alkyl-migration followed by a ketol-acid reduction of (S)-2-acetolactate (S2AL) to yield (R)-2,3-dihydroxy-isovalerate. In the isomerase reaction, S2AL is rearranged via a Mg-dependent methyl migration to produce 3-hydroxy-3-methyl-2-ketobutyrate (HMKB). In the reductase reaction, this 2-ketoacid undergoes a metal-dependent reduction by NADPH to yield (R)-2,3-dihydroxy-isovalerate.</text>
</comment>
<comment type="catalytic activity">
    <reaction evidence="1">
        <text>(2R)-2,3-dihydroxy-3-methylbutanoate + NADP(+) = (2S)-2-acetolactate + NADPH + H(+)</text>
        <dbReference type="Rhea" id="RHEA:22068"/>
        <dbReference type="ChEBI" id="CHEBI:15378"/>
        <dbReference type="ChEBI" id="CHEBI:49072"/>
        <dbReference type="ChEBI" id="CHEBI:57783"/>
        <dbReference type="ChEBI" id="CHEBI:58349"/>
        <dbReference type="ChEBI" id="CHEBI:58476"/>
        <dbReference type="EC" id="1.1.1.86"/>
    </reaction>
</comment>
<comment type="catalytic activity">
    <reaction evidence="1">
        <text>(2R,3R)-2,3-dihydroxy-3-methylpentanoate + NADP(+) = (S)-2-ethyl-2-hydroxy-3-oxobutanoate + NADPH + H(+)</text>
        <dbReference type="Rhea" id="RHEA:13493"/>
        <dbReference type="ChEBI" id="CHEBI:15378"/>
        <dbReference type="ChEBI" id="CHEBI:49256"/>
        <dbReference type="ChEBI" id="CHEBI:49258"/>
        <dbReference type="ChEBI" id="CHEBI:57783"/>
        <dbReference type="ChEBI" id="CHEBI:58349"/>
        <dbReference type="EC" id="1.1.1.86"/>
    </reaction>
</comment>
<comment type="cofactor">
    <cofactor evidence="1">
        <name>Mg(2+)</name>
        <dbReference type="ChEBI" id="CHEBI:18420"/>
    </cofactor>
    <text evidence="1">Binds 2 magnesium ions per subunit.</text>
</comment>
<comment type="pathway">
    <text evidence="1">Amino-acid biosynthesis; L-isoleucine biosynthesis; L-isoleucine from 2-oxobutanoate: step 2/4.</text>
</comment>
<comment type="pathway">
    <text evidence="1">Amino-acid biosynthesis; L-valine biosynthesis; L-valine from pyruvate: step 2/4.</text>
</comment>
<comment type="similarity">
    <text evidence="1">Belongs to the ketol-acid reductoisomerase family.</text>
</comment>
<gene>
    <name evidence="1" type="primary">ilvC</name>
    <name type="ordered locus">Cgl1273</name>
    <name type="ordered locus">cg1437</name>
</gene>
<reference key="1">
    <citation type="journal article" date="1993" name="J. Bacteriol.">
        <title>Isoleucine synthesis in Corynebacterium glutamicum: molecular analysis of the ilvB-ilvN-ilvC operon.</title>
        <authorList>
            <person name="Keilhauer C."/>
            <person name="Eggeling L."/>
            <person name="Sahm H."/>
        </authorList>
    </citation>
    <scope>NUCLEOTIDE SEQUENCE [GENOMIC DNA]</scope>
    <source>
        <strain>ATCC 13032 / DSM 20300 / JCM 1318 / BCRC 11384 / CCUG 27702 / LMG 3730 / NBRC 12168 / NCIMB 10025 / NRRL B-2784 / 534</strain>
    </source>
</reference>
<reference key="2">
    <citation type="journal article" date="1993" name="DNA Seq.">
        <title>Identification and sequence determination of the acetohydroxy acid isomeroreductase gene from Brevibacterium flavum MJ233.</title>
        <authorList>
            <person name="Inui M."/>
            <person name="Vertes A.A."/>
            <person name="Kobayashi M."/>
            <person name="Kurusu Y."/>
            <person name="Yukawa H."/>
        </authorList>
    </citation>
    <scope>NUCLEOTIDE SEQUENCE [GENOMIC DNA]</scope>
    <source>
        <strain>MJ233</strain>
    </source>
</reference>
<reference key="3">
    <citation type="journal article" date="2003" name="Appl. Microbiol. Biotechnol.">
        <title>The Corynebacterium glutamicum genome: features and impacts on biotechnological processes.</title>
        <authorList>
            <person name="Ikeda M."/>
            <person name="Nakagawa S."/>
        </authorList>
    </citation>
    <scope>NUCLEOTIDE SEQUENCE [LARGE SCALE GENOMIC DNA]</scope>
    <source>
        <strain>ATCC 13032 / DSM 20300 / JCM 1318 / BCRC 11384 / CCUG 27702 / LMG 3730 / NBRC 12168 / NCIMB 10025 / NRRL B-2784 / 534</strain>
    </source>
</reference>
<reference key="4">
    <citation type="journal article" date="2003" name="J. Biotechnol.">
        <title>The complete Corynebacterium glutamicum ATCC 13032 genome sequence and its impact on the production of L-aspartate-derived amino acids and vitamins.</title>
        <authorList>
            <person name="Kalinowski J."/>
            <person name="Bathe B."/>
            <person name="Bartels D."/>
            <person name="Bischoff N."/>
            <person name="Bott M."/>
            <person name="Burkovski A."/>
            <person name="Dusch N."/>
            <person name="Eggeling L."/>
            <person name="Eikmanns B.J."/>
            <person name="Gaigalat L."/>
            <person name="Goesmann A."/>
            <person name="Hartmann M."/>
            <person name="Huthmacher K."/>
            <person name="Kraemer R."/>
            <person name="Linke B."/>
            <person name="McHardy A.C."/>
            <person name="Meyer F."/>
            <person name="Moeckel B."/>
            <person name="Pfefferle W."/>
            <person name="Puehler A."/>
            <person name="Rey D.A."/>
            <person name="Rueckert C."/>
            <person name="Rupp O."/>
            <person name="Sahm H."/>
            <person name="Wendisch V.F."/>
            <person name="Wiegraebe I."/>
            <person name="Tauch A."/>
        </authorList>
    </citation>
    <scope>NUCLEOTIDE SEQUENCE [LARGE SCALE GENOMIC DNA]</scope>
    <source>
        <strain>ATCC 13032 / DSM 20300 / JCM 1318 / BCRC 11384 / CCUG 27702 / LMG 3730 / NBRC 12168 / NCIMB 10025 / NRRL B-2784 / 534</strain>
    </source>
</reference>
<organism>
    <name type="scientific">Corynebacterium glutamicum (strain ATCC 13032 / DSM 20300 / JCM 1318 / BCRC 11384 / CCUG 27702 / LMG 3730 / NBRC 12168 / NCIMB 10025 / NRRL B-2784 / 534)</name>
    <dbReference type="NCBI Taxonomy" id="196627"/>
    <lineage>
        <taxon>Bacteria</taxon>
        <taxon>Bacillati</taxon>
        <taxon>Actinomycetota</taxon>
        <taxon>Actinomycetes</taxon>
        <taxon>Mycobacteriales</taxon>
        <taxon>Corynebacteriaceae</taxon>
        <taxon>Corynebacterium</taxon>
    </lineage>
</organism>
<keyword id="KW-0002">3D-structure</keyword>
<keyword id="KW-0028">Amino-acid biosynthesis</keyword>
<keyword id="KW-0100">Branched-chain amino acid biosynthesis</keyword>
<keyword id="KW-0460">Magnesium</keyword>
<keyword id="KW-0479">Metal-binding</keyword>
<keyword id="KW-0521">NADP</keyword>
<keyword id="KW-0560">Oxidoreductase</keyword>
<keyword id="KW-1185">Reference proteome</keyword>
<feature type="chain" id="PRO_0000151306" description="Ketol-acid reductoisomerase (NADP(+))">
    <location>
        <begin position="1"/>
        <end position="338"/>
    </location>
</feature>
<feature type="domain" description="KARI N-terminal Rossmann" evidence="2">
    <location>
        <begin position="3"/>
        <end position="183"/>
    </location>
</feature>
<feature type="domain" description="KARI C-terminal knotted" evidence="3">
    <location>
        <begin position="184"/>
        <end position="329"/>
    </location>
</feature>
<feature type="active site" evidence="1">
    <location>
        <position position="109"/>
    </location>
</feature>
<feature type="binding site" evidence="1">
    <location>
        <begin position="26"/>
        <end position="29"/>
    </location>
    <ligand>
        <name>NADP(+)</name>
        <dbReference type="ChEBI" id="CHEBI:58349"/>
    </ligand>
</feature>
<feature type="binding site" evidence="1">
    <location>
        <position position="49"/>
    </location>
    <ligand>
        <name>NADP(+)</name>
        <dbReference type="ChEBI" id="CHEBI:58349"/>
    </ligand>
</feature>
<feature type="binding site" evidence="1">
    <location>
        <position position="52"/>
    </location>
    <ligand>
        <name>NADP(+)</name>
        <dbReference type="ChEBI" id="CHEBI:58349"/>
    </ligand>
</feature>
<feature type="binding site" evidence="1">
    <location>
        <position position="54"/>
    </location>
    <ligand>
        <name>NADP(+)</name>
        <dbReference type="ChEBI" id="CHEBI:58349"/>
    </ligand>
</feature>
<feature type="binding site" evidence="1">
    <location>
        <begin position="84"/>
        <end position="87"/>
    </location>
    <ligand>
        <name>NADP(+)</name>
        <dbReference type="ChEBI" id="CHEBI:58349"/>
    </ligand>
</feature>
<feature type="binding site" evidence="1">
    <location>
        <position position="135"/>
    </location>
    <ligand>
        <name>NADP(+)</name>
        <dbReference type="ChEBI" id="CHEBI:58349"/>
    </ligand>
</feature>
<feature type="binding site" evidence="1">
    <location>
        <position position="192"/>
    </location>
    <ligand>
        <name>Mg(2+)</name>
        <dbReference type="ChEBI" id="CHEBI:18420"/>
        <label>1</label>
    </ligand>
</feature>
<feature type="binding site" evidence="1">
    <location>
        <position position="192"/>
    </location>
    <ligand>
        <name>Mg(2+)</name>
        <dbReference type="ChEBI" id="CHEBI:18420"/>
        <label>2</label>
    </ligand>
</feature>
<feature type="binding site" evidence="1">
    <location>
        <position position="196"/>
    </location>
    <ligand>
        <name>Mg(2+)</name>
        <dbReference type="ChEBI" id="CHEBI:18420"/>
        <label>1</label>
    </ligand>
</feature>
<feature type="binding site" evidence="1">
    <location>
        <position position="228"/>
    </location>
    <ligand>
        <name>Mg(2+)</name>
        <dbReference type="ChEBI" id="CHEBI:18420"/>
        <label>2</label>
    </ligand>
</feature>
<feature type="binding site" evidence="1">
    <location>
        <position position="232"/>
    </location>
    <ligand>
        <name>Mg(2+)</name>
        <dbReference type="ChEBI" id="CHEBI:18420"/>
        <label>2</label>
    </ligand>
</feature>
<feature type="binding site" evidence="1">
    <location>
        <position position="253"/>
    </location>
    <ligand>
        <name>substrate</name>
    </ligand>
</feature>
<feature type="helix" evidence="4">
    <location>
        <begin position="8"/>
        <end position="10"/>
    </location>
</feature>
<feature type="helix" evidence="4">
    <location>
        <begin position="14"/>
        <end position="17"/>
    </location>
</feature>
<feature type="strand" evidence="4">
    <location>
        <begin position="19"/>
        <end position="24"/>
    </location>
</feature>
<feature type="helix" evidence="4">
    <location>
        <begin position="28"/>
        <end position="39"/>
    </location>
</feature>
<feature type="strand" evidence="4">
    <location>
        <begin position="43"/>
        <end position="48"/>
    </location>
</feature>
<feature type="helix" evidence="4">
    <location>
        <begin position="54"/>
        <end position="60"/>
    </location>
</feature>
<feature type="strand" evidence="4">
    <location>
        <begin position="65"/>
        <end position="67"/>
    </location>
</feature>
<feature type="helix" evidence="4">
    <location>
        <begin position="68"/>
        <end position="74"/>
    </location>
</feature>
<feature type="strand" evidence="4">
    <location>
        <begin position="76"/>
        <end position="80"/>
    </location>
</feature>
<feature type="helix" evidence="4">
    <location>
        <begin position="84"/>
        <end position="86"/>
    </location>
</feature>
<feature type="helix" evidence="4">
    <location>
        <begin position="87"/>
        <end position="94"/>
    </location>
</feature>
<feature type="helix" evidence="4">
    <location>
        <begin position="96"/>
        <end position="98"/>
    </location>
</feature>
<feature type="strand" evidence="4">
    <location>
        <begin position="104"/>
        <end position="110"/>
    </location>
</feature>
<feature type="helix" evidence="4">
    <location>
        <begin position="111"/>
        <end position="114"/>
    </location>
</feature>
<feature type="strand" evidence="4">
    <location>
        <begin position="124"/>
        <end position="133"/>
    </location>
</feature>
<feature type="helix" evidence="4">
    <location>
        <begin position="135"/>
        <end position="143"/>
    </location>
</feature>
<feature type="strand" evidence="4">
    <location>
        <begin position="150"/>
        <end position="156"/>
    </location>
</feature>
<feature type="strand" evidence="4">
    <location>
        <begin position="158"/>
        <end position="160"/>
    </location>
</feature>
<feature type="helix" evidence="4">
    <location>
        <begin position="162"/>
        <end position="173"/>
    </location>
</feature>
<feature type="helix" evidence="4">
    <location>
        <begin position="175"/>
        <end position="178"/>
    </location>
</feature>
<feature type="strand" evidence="4">
    <location>
        <begin position="180"/>
        <end position="182"/>
    </location>
</feature>
<feature type="helix" evidence="4">
    <location>
        <begin position="185"/>
        <end position="198"/>
    </location>
</feature>
<feature type="turn" evidence="4">
    <location>
        <begin position="199"/>
        <end position="201"/>
    </location>
</feature>
<feature type="helix" evidence="4">
    <location>
        <begin position="202"/>
        <end position="217"/>
    </location>
</feature>
<feature type="helix" evidence="4">
    <location>
        <begin position="222"/>
        <end position="229"/>
    </location>
</feature>
<feature type="turn" evidence="4">
    <location>
        <begin position="230"/>
        <end position="232"/>
    </location>
</feature>
<feature type="helix" evidence="4">
    <location>
        <begin position="233"/>
        <end position="242"/>
    </location>
</feature>
<feature type="helix" evidence="4">
    <location>
        <begin position="245"/>
        <end position="251"/>
    </location>
</feature>
<feature type="helix" evidence="4">
    <location>
        <begin position="254"/>
        <end position="267"/>
    </location>
</feature>
<feature type="helix" evidence="4">
    <location>
        <begin position="270"/>
        <end position="284"/>
    </location>
</feature>
<feature type="helix" evidence="4">
    <location>
        <begin position="287"/>
        <end position="297"/>
    </location>
</feature>
<feature type="turn" evidence="4">
    <location>
        <begin position="298"/>
        <end position="300"/>
    </location>
</feature>
<feature type="helix" evidence="4">
    <location>
        <begin position="301"/>
        <end position="311"/>
    </location>
</feature>
<feature type="helix" evidence="4">
    <location>
        <begin position="314"/>
        <end position="323"/>
    </location>
</feature>
<accession>Q57179</accession>
<protein>
    <recommendedName>
        <fullName evidence="1">Ketol-acid reductoisomerase (NADP(+))</fullName>
        <shortName evidence="1">KARI</shortName>
        <ecNumber evidence="1">1.1.1.86</ecNumber>
    </recommendedName>
    <alternativeName>
        <fullName evidence="1">Acetohydroxy-acid isomeroreductase</fullName>
        <shortName evidence="1">AHIR</shortName>
    </alternativeName>
    <alternativeName>
        <fullName evidence="1">Alpha-keto-beta-hydroxylacyl reductoisomerase</fullName>
    </alternativeName>
    <alternativeName>
        <fullName evidence="1">Ketol-acid reductoisomerase type 1</fullName>
    </alternativeName>
    <alternativeName>
        <fullName evidence="1">Ketol-acid reductoisomerase type I</fullName>
    </alternativeName>
</protein>
<dbReference type="EC" id="1.1.1.86" evidence="1"/>
<dbReference type="EMBL" id="L09232">
    <property type="protein sequence ID" value="AAA62431.1"/>
    <property type="molecule type" value="Genomic_DNA"/>
</dbReference>
<dbReference type="EMBL" id="D14551">
    <property type="protein sequence ID" value="BAA03414.1"/>
    <property type="molecule type" value="Genomic_DNA"/>
</dbReference>
<dbReference type="EMBL" id="BA000036">
    <property type="protein sequence ID" value="BAB98666.1"/>
    <property type="molecule type" value="Genomic_DNA"/>
</dbReference>
<dbReference type="EMBL" id="BX927151">
    <property type="protein sequence ID" value="CAF19976.1"/>
    <property type="molecule type" value="Genomic_DNA"/>
</dbReference>
<dbReference type="PIR" id="C48648">
    <property type="entry name" value="C48648"/>
</dbReference>
<dbReference type="RefSeq" id="NP_600495.1">
    <property type="nucleotide sequence ID" value="NC_003450.3"/>
</dbReference>
<dbReference type="RefSeq" id="WP_003854117.1">
    <property type="nucleotide sequence ID" value="NC_006958.1"/>
</dbReference>
<dbReference type="PDB" id="6JX2">
    <property type="method" value="X-ray"/>
    <property type="resolution" value="2.60 A"/>
    <property type="chains" value="A/B/C/D=1-338"/>
</dbReference>
<dbReference type="PDBsum" id="6JX2"/>
<dbReference type="SMR" id="Q57179"/>
<dbReference type="STRING" id="196627.cg1437"/>
<dbReference type="GeneID" id="1019254"/>
<dbReference type="KEGG" id="cgb:cg1437"/>
<dbReference type="KEGG" id="cgl:Cgl1273"/>
<dbReference type="PATRIC" id="fig|196627.13.peg.1250"/>
<dbReference type="eggNOG" id="COG0059">
    <property type="taxonomic scope" value="Bacteria"/>
</dbReference>
<dbReference type="HOGENOM" id="CLU_033821_0_1_11"/>
<dbReference type="OrthoDB" id="9804088at2"/>
<dbReference type="BioCyc" id="CORYNE:G18NG-10846-MONOMER"/>
<dbReference type="UniPathway" id="UPA00047">
    <property type="reaction ID" value="UER00056"/>
</dbReference>
<dbReference type="UniPathway" id="UPA00049">
    <property type="reaction ID" value="UER00060"/>
</dbReference>
<dbReference type="Proteomes" id="UP000000582">
    <property type="component" value="Chromosome"/>
</dbReference>
<dbReference type="Proteomes" id="UP000001009">
    <property type="component" value="Chromosome"/>
</dbReference>
<dbReference type="GO" id="GO:0005829">
    <property type="term" value="C:cytosol"/>
    <property type="evidence" value="ECO:0007669"/>
    <property type="project" value="TreeGrafter"/>
</dbReference>
<dbReference type="GO" id="GO:0008677">
    <property type="term" value="F:2-dehydropantoate 2-reductase activity"/>
    <property type="evidence" value="ECO:0000315"/>
    <property type="project" value="CACAO"/>
</dbReference>
<dbReference type="GO" id="GO:0004455">
    <property type="term" value="F:ketol-acid reductoisomerase activity"/>
    <property type="evidence" value="ECO:0007669"/>
    <property type="project" value="UniProtKB-UniRule"/>
</dbReference>
<dbReference type="GO" id="GO:0000287">
    <property type="term" value="F:magnesium ion binding"/>
    <property type="evidence" value="ECO:0007669"/>
    <property type="project" value="UniProtKB-UniRule"/>
</dbReference>
<dbReference type="GO" id="GO:0050661">
    <property type="term" value="F:NADP binding"/>
    <property type="evidence" value="ECO:0007669"/>
    <property type="project" value="InterPro"/>
</dbReference>
<dbReference type="GO" id="GO:0009097">
    <property type="term" value="P:isoleucine biosynthetic process"/>
    <property type="evidence" value="ECO:0007669"/>
    <property type="project" value="UniProtKB-UniRule"/>
</dbReference>
<dbReference type="GO" id="GO:0009099">
    <property type="term" value="P:L-valine biosynthetic process"/>
    <property type="evidence" value="ECO:0007669"/>
    <property type="project" value="UniProtKB-UniRule"/>
</dbReference>
<dbReference type="FunFam" id="3.40.50.720:FF:000023">
    <property type="entry name" value="Ketol-acid reductoisomerase (NADP(+))"/>
    <property type="match status" value="1"/>
</dbReference>
<dbReference type="Gene3D" id="6.10.240.10">
    <property type="match status" value="1"/>
</dbReference>
<dbReference type="Gene3D" id="3.40.50.720">
    <property type="entry name" value="NAD(P)-binding Rossmann-like Domain"/>
    <property type="match status" value="1"/>
</dbReference>
<dbReference type="HAMAP" id="MF_00435">
    <property type="entry name" value="IlvC"/>
    <property type="match status" value="1"/>
</dbReference>
<dbReference type="InterPro" id="IPR008927">
    <property type="entry name" value="6-PGluconate_DH-like_C_sf"/>
</dbReference>
<dbReference type="InterPro" id="IPR013023">
    <property type="entry name" value="KARI"/>
</dbReference>
<dbReference type="InterPro" id="IPR000506">
    <property type="entry name" value="KARI_C"/>
</dbReference>
<dbReference type="InterPro" id="IPR013116">
    <property type="entry name" value="KARI_N"/>
</dbReference>
<dbReference type="InterPro" id="IPR014359">
    <property type="entry name" value="KARI_prok"/>
</dbReference>
<dbReference type="InterPro" id="IPR036291">
    <property type="entry name" value="NAD(P)-bd_dom_sf"/>
</dbReference>
<dbReference type="NCBIfam" id="TIGR00465">
    <property type="entry name" value="ilvC"/>
    <property type="match status" value="1"/>
</dbReference>
<dbReference type="NCBIfam" id="NF004017">
    <property type="entry name" value="PRK05479.1"/>
    <property type="match status" value="1"/>
</dbReference>
<dbReference type="NCBIfam" id="NF009940">
    <property type="entry name" value="PRK13403.1"/>
    <property type="match status" value="1"/>
</dbReference>
<dbReference type="PANTHER" id="PTHR21371">
    <property type="entry name" value="KETOL-ACID REDUCTOISOMERASE, MITOCHONDRIAL"/>
    <property type="match status" value="1"/>
</dbReference>
<dbReference type="PANTHER" id="PTHR21371:SF1">
    <property type="entry name" value="KETOL-ACID REDUCTOISOMERASE, MITOCHONDRIAL"/>
    <property type="match status" value="1"/>
</dbReference>
<dbReference type="Pfam" id="PF01450">
    <property type="entry name" value="KARI_C"/>
    <property type="match status" value="1"/>
</dbReference>
<dbReference type="Pfam" id="PF07991">
    <property type="entry name" value="KARI_N"/>
    <property type="match status" value="1"/>
</dbReference>
<dbReference type="PIRSF" id="PIRSF000116">
    <property type="entry name" value="IlvC_gammaproteo"/>
    <property type="match status" value="1"/>
</dbReference>
<dbReference type="SUPFAM" id="SSF48179">
    <property type="entry name" value="6-phosphogluconate dehydrogenase C-terminal domain-like"/>
    <property type="match status" value="1"/>
</dbReference>
<dbReference type="SUPFAM" id="SSF51735">
    <property type="entry name" value="NAD(P)-binding Rossmann-fold domains"/>
    <property type="match status" value="1"/>
</dbReference>
<dbReference type="PROSITE" id="PS51851">
    <property type="entry name" value="KARI_C"/>
    <property type="match status" value="1"/>
</dbReference>
<dbReference type="PROSITE" id="PS51850">
    <property type="entry name" value="KARI_N"/>
    <property type="match status" value="1"/>
</dbReference>